<reference key="1">
    <citation type="journal article" date="2005" name="BMC Genomics">
        <title>Characterization of 954 bovine full-CDS cDNA sequences.</title>
        <authorList>
            <person name="Harhay G.P."/>
            <person name="Sonstegard T.S."/>
            <person name="Keele J.W."/>
            <person name="Heaton M.P."/>
            <person name="Clawson M.L."/>
            <person name="Snelling W.M."/>
            <person name="Wiedmann R.T."/>
            <person name="Van Tassell C.P."/>
            <person name="Smith T.P.L."/>
        </authorList>
    </citation>
    <scope>NUCLEOTIDE SEQUENCE [LARGE SCALE MRNA]</scope>
</reference>
<reference key="2">
    <citation type="submission" date="2006-02" db="EMBL/GenBank/DDBJ databases">
        <authorList>
            <consortium name="NIH - Mammalian Gene Collection (MGC) project"/>
        </authorList>
    </citation>
    <scope>NUCLEOTIDE SEQUENCE [LARGE SCALE MRNA]</scope>
    <source>
        <strain>Hereford</strain>
        <tissue>Uterus</tissue>
    </source>
</reference>
<comment type="function">
    <text evidence="1">Transmembrane reductase that may use ascorbate as an electron donor in the cytoplasm and transfer electrons across endoplasmic reticulum membranes to reduce monodehydro-L-ascorbate radical and iron cations Fe(3+) in the lumen of that compartment.</text>
</comment>
<comment type="catalytic activity">
    <reaction evidence="1">
        <text>monodehydro-L-ascorbate radical(out) + L-ascorbate(in) = monodehydro-L-ascorbate radical(in) + L-ascorbate(out)</text>
        <dbReference type="Rhea" id="RHEA:66524"/>
        <dbReference type="ChEBI" id="CHEBI:38290"/>
        <dbReference type="ChEBI" id="CHEBI:59513"/>
    </reaction>
    <physiologicalReaction direction="left-to-right" evidence="1">
        <dbReference type="Rhea" id="RHEA:66525"/>
    </physiologicalReaction>
</comment>
<comment type="catalytic activity">
    <reaction evidence="3">
        <text>Fe(3+)(out) + L-ascorbate(in) = monodehydro-L-ascorbate radical(in) + Fe(2+)(out) + H(+)</text>
        <dbReference type="Rhea" id="RHEA:30403"/>
        <dbReference type="ChEBI" id="CHEBI:15378"/>
        <dbReference type="ChEBI" id="CHEBI:29033"/>
        <dbReference type="ChEBI" id="CHEBI:29034"/>
        <dbReference type="ChEBI" id="CHEBI:38290"/>
        <dbReference type="ChEBI" id="CHEBI:59513"/>
        <dbReference type="EC" id="7.2.1.3"/>
    </reaction>
    <physiologicalReaction direction="left-to-right" evidence="3">
        <dbReference type="Rhea" id="RHEA:30404"/>
    </physiologicalReaction>
</comment>
<comment type="cofactor">
    <cofactor evidence="3">
        <name>heme b</name>
        <dbReference type="ChEBI" id="CHEBI:60344"/>
    </cofactor>
    <text evidence="3">Binds 2 heme b groups non-covalently.</text>
</comment>
<comment type="subcellular location">
    <subcellularLocation>
        <location evidence="3">Endoplasmic reticulum membrane</location>
        <topology evidence="2">Multi-pass membrane protein</topology>
    </subcellularLocation>
    <subcellularLocation>
        <location evidence="3">Cytoplasmic vesicle membrane</location>
        <topology evidence="2">Multi-pass membrane protein</topology>
    </subcellularLocation>
</comment>
<sequence length="222" mass="24077">MALSVETESHIYRALRTVSGAAAHLVALGFTIFVAVLARPGSSLFSWHPVLMSLAFSFLMTEALLVFSPESSLLRSLSRKGRARCHWVLQLLALLCALLGLGLVILHKEQLGKAHLATWHGRAGLLAVLWAGLQCSGGVGLLYPKLLPRWPLAKLKLYHATSGLVGYLLGGASLLLGMCSLWFTATVTGGVWYLAVLCPVITSLVIMNQVSNAYLYRKRIQP</sequence>
<gene>
    <name evidence="1" type="primary">CYB561D2</name>
</gene>
<accession>Q5E965</accession>
<accession>Q29S15</accession>
<proteinExistence type="evidence at transcript level"/>
<organism>
    <name type="scientific">Bos taurus</name>
    <name type="common">Bovine</name>
    <dbReference type="NCBI Taxonomy" id="9913"/>
    <lineage>
        <taxon>Eukaryota</taxon>
        <taxon>Metazoa</taxon>
        <taxon>Chordata</taxon>
        <taxon>Craniata</taxon>
        <taxon>Vertebrata</taxon>
        <taxon>Euteleostomi</taxon>
        <taxon>Mammalia</taxon>
        <taxon>Eutheria</taxon>
        <taxon>Laurasiatheria</taxon>
        <taxon>Artiodactyla</taxon>
        <taxon>Ruminantia</taxon>
        <taxon>Pecora</taxon>
        <taxon>Bovidae</taxon>
        <taxon>Bovinae</taxon>
        <taxon>Bos</taxon>
    </lineage>
</organism>
<evidence type="ECO:0000250" key="1">
    <source>
        <dbReference type="UniProtKB" id="O14569"/>
    </source>
</evidence>
<evidence type="ECO:0000250" key="2">
    <source>
        <dbReference type="UniProtKB" id="Q53TN4"/>
    </source>
</evidence>
<evidence type="ECO:0000250" key="3">
    <source>
        <dbReference type="UniProtKB" id="Q9WUE3"/>
    </source>
</evidence>
<evidence type="ECO:0000255" key="4"/>
<evidence type="ECO:0000255" key="5">
    <source>
        <dbReference type="PROSITE-ProRule" id="PRU00242"/>
    </source>
</evidence>
<dbReference type="EC" id="7.2.1.3" evidence="1"/>
<dbReference type="EMBL" id="BT021055">
    <property type="protein sequence ID" value="AAX09072.1"/>
    <property type="molecule type" value="mRNA"/>
</dbReference>
<dbReference type="EMBL" id="BC113226">
    <property type="protein sequence ID" value="AAI13227.1"/>
    <property type="molecule type" value="mRNA"/>
</dbReference>
<dbReference type="RefSeq" id="NP_001014937.1">
    <property type="nucleotide sequence ID" value="NM_001014937.2"/>
</dbReference>
<dbReference type="RefSeq" id="XP_005222905.1">
    <property type="nucleotide sequence ID" value="XM_005222848.5"/>
</dbReference>
<dbReference type="RefSeq" id="XP_005222906.1">
    <property type="nucleotide sequence ID" value="XM_005222849.5"/>
</dbReference>
<dbReference type="SMR" id="Q5E965"/>
<dbReference type="FunCoup" id="Q5E965">
    <property type="interactions" value="857"/>
</dbReference>
<dbReference type="STRING" id="9913.ENSBTAP00000025505"/>
<dbReference type="PaxDb" id="9913-ENSBTAP00000025505"/>
<dbReference type="Ensembl" id="ENSBTAT00000025505.4">
    <property type="protein sequence ID" value="ENSBTAP00000025505.2"/>
    <property type="gene ID" value="ENSBTAG00000019163.4"/>
</dbReference>
<dbReference type="GeneID" id="523966"/>
<dbReference type="KEGG" id="bta:523966"/>
<dbReference type="CTD" id="11068"/>
<dbReference type="VEuPathDB" id="HostDB:ENSBTAG00000019163"/>
<dbReference type="eggNOG" id="ENOG502QRPJ">
    <property type="taxonomic scope" value="Eukaryota"/>
</dbReference>
<dbReference type="GeneTree" id="ENSGT00440000038072"/>
<dbReference type="HOGENOM" id="CLU_072399_3_0_1"/>
<dbReference type="InParanoid" id="Q5E965"/>
<dbReference type="OMA" id="IFYNKHL"/>
<dbReference type="OrthoDB" id="432881at2759"/>
<dbReference type="TreeFam" id="TF323584"/>
<dbReference type="Proteomes" id="UP000009136">
    <property type="component" value="Chromosome 22"/>
</dbReference>
<dbReference type="Bgee" id="ENSBTAG00000019163">
    <property type="expression patterns" value="Expressed in thyroid gland and 105 other cell types or tissues"/>
</dbReference>
<dbReference type="GO" id="GO:0030659">
    <property type="term" value="C:cytoplasmic vesicle membrane"/>
    <property type="evidence" value="ECO:0007669"/>
    <property type="project" value="UniProtKB-SubCell"/>
</dbReference>
<dbReference type="GO" id="GO:0005783">
    <property type="term" value="C:endoplasmic reticulum"/>
    <property type="evidence" value="ECO:0000250"/>
    <property type="project" value="UniProtKB"/>
</dbReference>
<dbReference type="GO" id="GO:0005789">
    <property type="term" value="C:endoplasmic reticulum membrane"/>
    <property type="evidence" value="ECO:0007669"/>
    <property type="project" value="UniProtKB-SubCell"/>
</dbReference>
<dbReference type="GO" id="GO:0031982">
    <property type="term" value="C:vesicle"/>
    <property type="evidence" value="ECO:0000250"/>
    <property type="project" value="UniProtKB"/>
</dbReference>
<dbReference type="GO" id="GO:0020037">
    <property type="term" value="F:heme binding"/>
    <property type="evidence" value="ECO:0000250"/>
    <property type="project" value="UniProtKB"/>
</dbReference>
<dbReference type="GO" id="GO:0046872">
    <property type="term" value="F:metal ion binding"/>
    <property type="evidence" value="ECO:0007669"/>
    <property type="project" value="UniProtKB-KW"/>
</dbReference>
<dbReference type="GO" id="GO:0140571">
    <property type="term" value="F:transmembrane ascorbate ferrireductase activity"/>
    <property type="evidence" value="ECO:0000250"/>
    <property type="project" value="UniProtKB"/>
</dbReference>
<dbReference type="GO" id="GO:0140575">
    <property type="term" value="F:transmembrane monodehydroascorbate reductase activity"/>
    <property type="evidence" value="ECO:0000250"/>
    <property type="project" value="UniProtKB"/>
</dbReference>
<dbReference type="GO" id="GO:0140576">
    <property type="term" value="P:ascorbate homeostasis"/>
    <property type="evidence" value="ECO:0000250"/>
    <property type="project" value="UniProtKB"/>
</dbReference>
<dbReference type="CDD" id="cd08761">
    <property type="entry name" value="Cyt_b561_CYB561D2_like"/>
    <property type="match status" value="1"/>
</dbReference>
<dbReference type="FunFam" id="1.20.120.1770:FF:000002">
    <property type="entry name" value="Cytochrome b561 domain-containing protein 2"/>
    <property type="match status" value="1"/>
</dbReference>
<dbReference type="Gene3D" id="1.20.120.1770">
    <property type="match status" value="1"/>
</dbReference>
<dbReference type="InterPro" id="IPR045150">
    <property type="entry name" value="CYB561D1/2"/>
</dbReference>
<dbReference type="InterPro" id="IPR006593">
    <property type="entry name" value="Cyt_b561/ferric_Rdtase_TM"/>
</dbReference>
<dbReference type="PANTHER" id="PTHR15422">
    <property type="entry name" value="OS05G0565100 PROTEIN"/>
    <property type="match status" value="1"/>
</dbReference>
<dbReference type="PANTHER" id="PTHR15422:SF21">
    <property type="entry name" value="TRANSMEMBRANE REDUCTASE CYB561D2"/>
    <property type="match status" value="1"/>
</dbReference>
<dbReference type="Pfam" id="PF03188">
    <property type="entry name" value="Cytochrom_B561"/>
    <property type="match status" value="1"/>
</dbReference>
<dbReference type="SMART" id="SM00665">
    <property type="entry name" value="B561"/>
    <property type="match status" value="1"/>
</dbReference>
<dbReference type="PROSITE" id="PS50939">
    <property type="entry name" value="CYTOCHROME_B561"/>
    <property type="match status" value="1"/>
</dbReference>
<keyword id="KW-0968">Cytoplasmic vesicle</keyword>
<keyword id="KW-0249">Electron transport</keyword>
<keyword id="KW-0256">Endoplasmic reticulum</keyword>
<keyword id="KW-0349">Heme</keyword>
<keyword id="KW-0408">Iron</keyword>
<keyword id="KW-0472">Membrane</keyword>
<keyword id="KW-0479">Metal-binding</keyword>
<keyword id="KW-1185">Reference proteome</keyword>
<keyword id="KW-1278">Translocase</keyword>
<keyword id="KW-0812">Transmembrane</keyword>
<keyword id="KW-1133">Transmembrane helix</keyword>
<keyword id="KW-0813">Transport</keyword>
<name>C56D2_BOVIN</name>
<feature type="initiator methionine" description="Removed" evidence="1">
    <location>
        <position position="1"/>
    </location>
</feature>
<feature type="chain" id="PRO_0000151035" description="Transmembrane reductase CYB561D2">
    <location>
        <begin position="2"/>
        <end position="222"/>
    </location>
</feature>
<feature type="topological domain" description="Cytoplasmic" evidence="2">
    <location>
        <begin position="2"/>
        <end position="17"/>
    </location>
</feature>
<feature type="transmembrane region" description="Helical" evidence="4">
    <location>
        <begin position="18"/>
        <end position="38"/>
    </location>
</feature>
<feature type="topological domain" description="Lumenal" evidence="2">
    <location>
        <begin position="39"/>
        <end position="46"/>
    </location>
</feature>
<feature type="transmembrane region" description="Helical" evidence="4">
    <location>
        <begin position="47"/>
        <end position="67"/>
    </location>
</feature>
<feature type="topological domain" description="Cytoplasmic" evidence="2">
    <location>
        <begin position="68"/>
        <end position="85"/>
    </location>
</feature>
<feature type="transmembrane region" description="Helical" evidence="4">
    <location>
        <begin position="86"/>
        <end position="106"/>
    </location>
</feature>
<feature type="topological domain" description="Lumenal" evidence="2">
    <location>
        <begin position="107"/>
        <end position="122"/>
    </location>
</feature>
<feature type="transmembrane region" description="Helical" evidence="4">
    <location>
        <begin position="123"/>
        <end position="143"/>
    </location>
</feature>
<feature type="topological domain" description="Cytoplasmic" evidence="2">
    <location>
        <begin position="144"/>
        <end position="162"/>
    </location>
</feature>
<feature type="transmembrane region" description="Helical" evidence="4">
    <location>
        <begin position="163"/>
        <end position="183"/>
    </location>
</feature>
<feature type="topological domain" description="Lumenal" evidence="2">
    <location>
        <begin position="184"/>
        <end position="186"/>
    </location>
</feature>
<feature type="transmembrane region" description="Helical" evidence="4">
    <location>
        <begin position="187"/>
        <end position="207"/>
    </location>
</feature>
<feature type="topological domain" description="Cytoplasmic" evidence="2">
    <location>
        <begin position="208"/>
        <end position="222"/>
    </location>
</feature>
<feature type="domain" description="Cytochrome b561" evidence="5">
    <location>
        <begin position="14"/>
        <end position="217"/>
    </location>
</feature>
<feature type="binding site" description="axial binding residue" evidence="2">
    <location>
        <position position="48"/>
    </location>
    <ligand>
        <name>heme b</name>
        <dbReference type="ChEBI" id="CHEBI:60344"/>
        <label>1</label>
    </ligand>
    <ligandPart>
        <name>Fe</name>
        <dbReference type="ChEBI" id="CHEBI:18248"/>
    </ligandPart>
</feature>
<feature type="binding site" description="axial binding residue" evidence="2">
    <location>
        <position position="86"/>
    </location>
    <ligand>
        <name>heme b</name>
        <dbReference type="ChEBI" id="CHEBI:60344"/>
        <label>2</label>
    </ligand>
    <ligandPart>
        <name>Fe</name>
        <dbReference type="ChEBI" id="CHEBI:18248"/>
    </ligandPart>
</feature>
<feature type="binding site" description="axial binding residue" evidence="2">
    <location>
        <position position="120"/>
    </location>
    <ligand>
        <name>heme b</name>
        <dbReference type="ChEBI" id="CHEBI:60344"/>
        <label>1</label>
    </ligand>
    <ligandPart>
        <name>Fe</name>
        <dbReference type="ChEBI" id="CHEBI:18248"/>
    </ligandPart>
</feature>
<feature type="binding site" description="axial binding residue" evidence="2">
    <location>
        <position position="159"/>
    </location>
    <ligand>
        <name>heme b</name>
        <dbReference type="ChEBI" id="CHEBI:60344"/>
        <label>2</label>
    </ligand>
    <ligandPart>
        <name>Fe</name>
        <dbReference type="ChEBI" id="CHEBI:18248"/>
    </ligandPart>
</feature>
<protein>
    <recommendedName>
        <fullName evidence="1">Transmembrane reductase CYB561D2</fullName>
        <ecNumber evidence="1">7.2.1.3</ecNumber>
    </recommendedName>
    <alternativeName>
        <fullName evidence="1">Cytochrome b561 domain-containing protein 2</fullName>
    </alternativeName>
</protein>